<comment type="function">
    <text evidence="1">PhoP-regulated transcription is redox-sensitive, being activated when the periplasm becomes more reducing. MgrB acts between DsbA/DsbB and PhoP/PhoQ in this pathway. Represses PhoP/PhoQ signaling, possibly by binding to the periplasmic domain of PhoQ, altering its activity and that of downstream effector PhoP.</text>
</comment>
<comment type="subunit">
    <text evidence="1">May form homooligomers. Probably interacts with the periplasmic domain of PhoQ.</text>
</comment>
<comment type="subcellular location">
    <subcellularLocation>
        <location evidence="1">Cell inner membrane</location>
        <topology evidence="1">Single-pass membrane protein</topology>
    </subcellularLocation>
</comment>
<comment type="similarity">
    <text evidence="1">Belongs to the MgrB family.</text>
</comment>
<keyword id="KW-0997">Cell inner membrane</keyword>
<keyword id="KW-1003">Cell membrane</keyword>
<keyword id="KW-0472">Membrane</keyword>
<keyword id="KW-0812">Transmembrane</keyword>
<keyword id="KW-1133">Transmembrane helix</keyword>
<accession>B1J0R3</accession>
<feature type="chain" id="PRO_1000088002" description="PhoP/PhoQ regulator MgrB">
    <location>
        <begin position="1"/>
        <end position="47"/>
    </location>
</feature>
<feature type="transmembrane region" description="Helical" evidence="1">
    <location>
        <begin position="6"/>
        <end position="26"/>
    </location>
</feature>
<organism>
    <name type="scientific">Escherichia coli (strain ATCC 8739 / DSM 1576 / NBRC 3972 / NCIMB 8545 / WDCM 00012 / Crooks)</name>
    <dbReference type="NCBI Taxonomy" id="481805"/>
    <lineage>
        <taxon>Bacteria</taxon>
        <taxon>Pseudomonadati</taxon>
        <taxon>Pseudomonadota</taxon>
        <taxon>Gammaproteobacteria</taxon>
        <taxon>Enterobacterales</taxon>
        <taxon>Enterobacteriaceae</taxon>
        <taxon>Escherichia</taxon>
    </lineage>
</organism>
<name>MGRB_ECOLC</name>
<protein>
    <recommendedName>
        <fullName evidence="1">PhoP/PhoQ regulator MgrB</fullName>
    </recommendedName>
</protein>
<gene>
    <name evidence="1" type="primary">mgrB</name>
    <name type="ordered locus">EcolC_1807</name>
</gene>
<evidence type="ECO:0000255" key="1">
    <source>
        <dbReference type="HAMAP-Rule" id="MF_01596"/>
    </source>
</evidence>
<dbReference type="EMBL" id="CP000946">
    <property type="protein sequence ID" value="ACA77457.1"/>
    <property type="molecule type" value="Genomic_DNA"/>
</dbReference>
<dbReference type="RefSeq" id="WP_000714550.1">
    <property type="nucleotide sequence ID" value="NZ_MTFT01000011.1"/>
</dbReference>
<dbReference type="SMR" id="B1J0R3"/>
<dbReference type="GeneID" id="93776075"/>
<dbReference type="KEGG" id="ecl:EcolC_1807"/>
<dbReference type="HOGENOM" id="CLU_208030_1_0_6"/>
<dbReference type="GO" id="GO:0005886">
    <property type="term" value="C:plasma membrane"/>
    <property type="evidence" value="ECO:0007669"/>
    <property type="project" value="UniProtKB-SubCell"/>
</dbReference>
<dbReference type="GO" id="GO:0070298">
    <property type="term" value="P:negative regulation of phosphorelay signal transduction system"/>
    <property type="evidence" value="ECO:0007669"/>
    <property type="project" value="UniProtKB-UniRule"/>
</dbReference>
<dbReference type="HAMAP" id="MF_01596">
    <property type="entry name" value="MgrB"/>
    <property type="match status" value="1"/>
</dbReference>
<dbReference type="InterPro" id="IPR020907">
    <property type="entry name" value="MgrB"/>
</dbReference>
<dbReference type="NCBIfam" id="NF007635">
    <property type="entry name" value="PRK10299.1"/>
    <property type="match status" value="1"/>
</dbReference>
<dbReference type="Pfam" id="PF13998">
    <property type="entry name" value="MgrB"/>
    <property type="match status" value="1"/>
</dbReference>
<dbReference type="PROSITE" id="PS51257">
    <property type="entry name" value="PROKAR_LIPOPROTEIN"/>
    <property type="match status" value="1"/>
</dbReference>
<proteinExistence type="inferred from homology"/>
<reference key="1">
    <citation type="submission" date="2008-02" db="EMBL/GenBank/DDBJ databases">
        <title>Complete sequence of Escherichia coli C str. ATCC 8739.</title>
        <authorList>
            <person name="Copeland A."/>
            <person name="Lucas S."/>
            <person name="Lapidus A."/>
            <person name="Glavina del Rio T."/>
            <person name="Dalin E."/>
            <person name="Tice H."/>
            <person name="Bruce D."/>
            <person name="Goodwin L."/>
            <person name="Pitluck S."/>
            <person name="Kiss H."/>
            <person name="Brettin T."/>
            <person name="Detter J.C."/>
            <person name="Han C."/>
            <person name="Kuske C.R."/>
            <person name="Schmutz J."/>
            <person name="Larimer F."/>
            <person name="Land M."/>
            <person name="Hauser L."/>
            <person name="Kyrpides N."/>
            <person name="Mikhailova N."/>
            <person name="Ingram L."/>
            <person name="Richardson P."/>
        </authorList>
    </citation>
    <scope>NUCLEOTIDE SEQUENCE [LARGE SCALE GENOMIC DNA]</scope>
    <source>
        <strain>ATCC 8739 / DSM 1576 / NBRC 3972 / NCIMB 8545 / WDCM 00012 / Crooks</strain>
    </source>
</reference>
<sequence>MKKFRWVVLVVVVLACLLLWAQVFNMMCDQDVQFFSGICAINQFIPW</sequence>